<gene>
    <name type="ORF">DDB_G0288661</name>
</gene>
<proteinExistence type="inferred from homology"/>
<sequence length="307" mass="35198">MKFQKRNIQLVLILLLILNNCFINSQVENSKKEKVDVSALIQSYGSELFNYLNNWNKVEENNNKNNNNNNNNNNNNNNNNKNSKVKNDDSIVNTFSNYGNQILNYLNIGDGGEKQKQNQKEKENQSVFSKFSNNVLGLFNFEKTKDKKEDEGILPSIIKNIQDYVKWGKNENNESSGDKYPNFETQSSSFSHSPYGDIFGININDIIASPLLNEISDSSLNYLKQQFGLSNQIIQLLIQFRNTIIFAITFIIFLFTYLIIYYLASIGNSIVISFIIGVLTVFLWVIITLLFTIVIGYKKNGEKTLEL</sequence>
<accession>Q54IM2</accession>
<comment type="subcellular location">
    <subcellularLocation>
        <location evidence="3">Membrane</location>
        <topology evidence="3">Multi-pass membrane protein</topology>
    </subcellularLocation>
</comment>
<reference key="1">
    <citation type="journal article" date="2005" name="Nature">
        <title>The genome of the social amoeba Dictyostelium discoideum.</title>
        <authorList>
            <person name="Eichinger L."/>
            <person name="Pachebat J.A."/>
            <person name="Gloeckner G."/>
            <person name="Rajandream M.A."/>
            <person name="Sucgang R."/>
            <person name="Berriman M."/>
            <person name="Song J."/>
            <person name="Olsen R."/>
            <person name="Szafranski K."/>
            <person name="Xu Q."/>
            <person name="Tunggal B."/>
            <person name="Kummerfeld S."/>
            <person name="Madera M."/>
            <person name="Konfortov B.A."/>
            <person name="Rivero F."/>
            <person name="Bankier A.T."/>
            <person name="Lehmann R."/>
            <person name="Hamlin N."/>
            <person name="Davies R."/>
            <person name="Gaudet P."/>
            <person name="Fey P."/>
            <person name="Pilcher K."/>
            <person name="Chen G."/>
            <person name="Saunders D."/>
            <person name="Sodergren E.J."/>
            <person name="Davis P."/>
            <person name="Kerhornou A."/>
            <person name="Nie X."/>
            <person name="Hall N."/>
            <person name="Anjard C."/>
            <person name="Hemphill L."/>
            <person name="Bason N."/>
            <person name="Farbrother P."/>
            <person name="Desany B."/>
            <person name="Just E."/>
            <person name="Morio T."/>
            <person name="Rost R."/>
            <person name="Churcher C.M."/>
            <person name="Cooper J."/>
            <person name="Haydock S."/>
            <person name="van Driessche N."/>
            <person name="Cronin A."/>
            <person name="Goodhead I."/>
            <person name="Muzny D.M."/>
            <person name="Mourier T."/>
            <person name="Pain A."/>
            <person name="Lu M."/>
            <person name="Harper D."/>
            <person name="Lindsay R."/>
            <person name="Hauser H."/>
            <person name="James K.D."/>
            <person name="Quiles M."/>
            <person name="Madan Babu M."/>
            <person name="Saito T."/>
            <person name="Buchrieser C."/>
            <person name="Wardroper A."/>
            <person name="Felder M."/>
            <person name="Thangavelu M."/>
            <person name="Johnson D."/>
            <person name="Knights A."/>
            <person name="Loulseged H."/>
            <person name="Mungall K.L."/>
            <person name="Oliver K."/>
            <person name="Price C."/>
            <person name="Quail M.A."/>
            <person name="Urushihara H."/>
            <person name="Hernandez J."/>
            <person name="Rabbinowitsch E."/>
            <person name="Steffen D."/>
            <person name="Sanders M."/>
            <person name="Ma J."/>
            <person name="Kohara Y."/>
            <person name="Sharp S."/>
            <person name="Simmonds M.N."/>
            <person name="Spiegler S."/>
            <person name="Tivey A."/>
            <person name="Sugano S."/>
            <person name="White B."/>
            <person name="Walker D."/>
            <person name="Woodward J.R."/>
            <person name="Winckler T."/>
            <person name="Tanaka Y."/>
            <person name="Shaulsky G."/>
            <person name="Schleicher M."/>
            <person name="Weinstock G.M."/>
            <person name="Rosenthal A."/>
            <person name="Cox E.C."/>
            <person name="Chisholm R.L."/>
            <person name="Gibbs R.A."/>
            <person name="Loomis W.F."/>
            <person name="Platzer M."/>
            <person name="Kay R.R."/>
            <person name="Williams J.G."/>
            <person name="Dear P.H."/>
            <person name="Noegel A.A."/>
            <person name="Barrell B.G."/>
            <person name="Kuspa A."/>
        </authorList>
    </citation>
    <scope>NUCLEOTIDE SEQUENCE [LARGE SCALE GENOMIC DNA]</scope>
    <source>
        <strain>AX4</strain>
    </source>
</reference>
<protein>
    <recommendedName>
        <fullName>Putative uncharacterized transmembrane protein DDB_G0288661</fullName>
    </recommendedName>
</protein>
<feature type="signal peptide" evidence="1">
    <location>
        <begin position="1"/>
        <end position="25"/>
    </location>
</feature>
<feature type="chain" id="PRO_0000346977" description="Putative uncharacterized transmembrane protein DDB_G0288661">
    <location>
        <begin position="26"/>
        <end position="307"/>
    </location>
</feature>
<feature type="transmembrane region" description="Helical" evidence="1">
    <location>
        <begin position="244"/>
        <end position="264"/>
    </location>
</feature>
<feature type="transmembrane region" description="Helical" evidence="1">
    <location>
        <begin position="275"/>
        <end position="295"/>
    </location>
</feature>
<feature type="region of interest" description="Disordered" evidence="2">
    <location>
        <begin position="60"/>
        <end position="90"/>
    </location>
</feature>
<feature type="compositionally biased region" description="Low complexity" evidence="2">
    <location>
        <begin position="63"/>
        <end position="82"/>
    </location>
</feature>
<feature type="glycosylation site" description="N-linked (GlcNAc...) asparagine" evidence="1">
    <location>
        <position position="124"/>
    </location>
</feature>
<feature type="glycosylation site" description="N-linked (GlcNAc...) asparagine" evidence="1">
    <location>
        <position position="173"/>
    </location>
</feature>
<keyword id="KW-0325">Glycoprotein</keyword>
<keyword id="KW-0472">Membrane</keyword>
<keyword id="KW-1185">Reference proteome</keyword>
<keyword id="KW-0732">Signal</keyword>
<keyword id="KW-0812">Transmembrane</keyword>
<keyword id="KW-1133">Transmembrane helix</keyword>
<organism>
    <name type="scientific">Dictyostelium discoideum</name>
    <name type="common">Social amoeba</name>
    <dbReference type="NCBI Taxonomy" id="44689"/>
    <lineage>
        <taxon>Eukaryota</taxon>
        <taxon>Amoebozoa</taxon>
        <taxon>Evosea</taxon>
        <taxon>Eumycetozoa</taxon>
        <taxon>Dictyostelia</taxon>
        <taxon>Dictyosteliales</taxon>
        <taxon>Dictyosteliaceae</taxon>
        <taxon>Dictyostelium</taxon>
    </lineage>
</organism>
<name>Y8040_DICDI</name>
<dbReference type="EMBL" id="AAFI02000119">
    <property type="protein sequence ID" value="EAL63107.1"/>
    <property type="molecule type" value="Genomic_DNA"/>
</dbReference>
<dbReference type="RefSeq" id="XP_636609.1">
    <property type="nucleotide sequence ID" value="XM_631517.1"/>
</dbReference>
<dbReference type="SMR" id="Q54IM2"/>
<dbReference type="GlyGen" id="Q54IM2">
    <property type="glycosylation" value="2 sites"/>
</dbReference>
<dbReference type="PaxDb" id="44689-DDB0188040"/>
<dbReference type="EnsemblProtists" id="EAL63107">
    <property type="protein sequence ID" value="EAL63107"/>
    <property type="gene ID" value="DDB_G0288661"/>
</dbReference>
<dbReference type="GeneID" id="8626737"/>
<dbReference type="KEGG" id="ddi:DDB_G0288661"/>
<dbReference type="dictyBase" id="DDB_G0288661"/>
<dbReference type="VEuPathDB" id="AmoebaDB:DDB_G0288661"/>
<dbReference type="HOGENOM" id="CLU_907405_0_0_1"/>
<dbReference type="InParanoid" id="Q54IM2"/>
<dbReference type="PRO" id="PR:Q54IM2"/>
<dbReference type="Proteomes" id="UP000002195">
    <property type="component" value="Chromosome 5"/>
</dbReference>
<dbReference type="GO" id="GO:0016020">
    <property type="term" value="C:membrane"/>
    <property type="evidence" value="ECO:0007669"/>
    <property type="project" value="UniProtKB-SubCell"/>
</dbReference>
<evidence type="ECO:0000255" key="1"/>
<evidence type="ECO:0000256" key="2">
    <source>
        <dbReference type="SAM" id="MobiDB-lite"/>
    </source>
</evidence>
<evidence type="ECO:0000305" key="3"/>